<evidence type="ECO:0000255" key="1"/>
<evidence type="ECO:0000255" key="2">
    <source>
        <dbReference type="PROSITE-ProRule" id="PRU00498"/>
    </source>
</evidence>
<evidence type="ECO:0000269" key="3">
    <source>
    </source>
</evidence>
<evidence type="ECO:0000269" key="4">
    <source>
    </source>
</evidence>
<evidence type="ECO:0000269" key="5">
    <source>
    </source>
</evidence>
<evidence type="ECO:0000269" key="6">
    <source>
    </source>
</evidence>
<evidence type="ECO:0000269" key="7">
    <source>
    </source>
</evidence>
<evidence type="ECO:0000269" key="8">
    <source>
    </source>
</evidence>
<evidence type="ECO:0000269" key="9">
    <source>
    </source>
</evidence>
<evidence type="ECO:0000303" key="10">
    <source>
    </source>
</evidence>
<evidence type="ECO:0000303" key="11">
    <source>
    </source>
</evidence>
<evidence type="ECO:0000305" key="12"/>
<gene>
    <name evidence="10" type="primary">atC</name>
    <name type="ORF">ATEG_06274</name>
</gene>
<organism>
    <name type="scientific">Aspergillus terreus (strain NIH 2624 / FGSC A1156)</name>
    <dbReference type="NCBI Taxonomy" id="341663"/>
    <lineage>
        <taxon>Eukaryota</taxon>
        <taxon>Fungi</taxon>
        <taxon>Dikarya</taxon>
        <taxon>Ascomycota</taxon>
        <taxon>Pezizomycotina</taxon>
        <taxon>Eurotiomycetes</taxon>
        <taxon>Eurotiomycetidae</taxon>
        <taxon>Eurotiales</taxon>
        <taxon>Aspergillaceae</taxon>
        <taxon>Aspergillus</taxon>
        <taxon>Aspergillus subgen. Circumdati</taxon>
    </lineage>
</organism>
<name>ATC_ASPTN</name>
<comment type="function">
    <text evidence="5 6 7 8 9">Glucose methanol choline oxidoreductase; part of the gene cluster that mediates the biosynthesis of terreic acid, a quinone epoxide inhibitor of Bruton's tyrosine kinase (PubMed:29391515). The first step of the pathway is the synthesis of 6-methylsalicylic acid (6-MSA) by the 6-methylsalicylic acid synthase atX (PubMed:25265334, PubMed:29391515, PubMed:9003280, PubMed:9438344). In the biosynthesis of 6-MSA, atX utilizes one acetyl-CoA and three malonyl-CoAs as its substrates and catalyzes a series of programmed reactions including Claisen condensation, reduction, aldol cyclization, and the hydrolytic cleavage that yields 6-MSA (PubMed:25265334, PubMed:9003280, PubMed:9438344). The 6-methylsalicylate 1-monooxygenase atA then catalyzes the decarboxylative hydroxylation of 6-MSA to 3-methylcatechol (PubMed:25265334, PubMed:29391515). The next step is the conversion of 3-methylcatechol to 3-methyl-1,2,4-benzenetriol by cytochrome P450 monooxygenase atE, which is enhanced by cytochrome P450 monooxygenase atG (PubMed:25265334, PubMed:29391515). Then, the epoxidase atD catalyzes the epoxidation and hydroxyl oxidation of 3-methyl-1,2,4-benzenetriol to terremutin (PubMed:29391515). Lastly, GMC oxidoreductase atC oxidizes terremutin to terreic acid (PubMed:25265334, PubMed:29391515).</text>
</comment>
<comment type="catalytic activity">
    <reaction evidence="7">
        <text>terremutin + A = terreate + AH2</text>
        <dbReference type="Rhea" id="RHEA:84167"/>
        <dbReference type="ChEBI" id="CHEBI:13193"/>
        <dbReference type="ChEBI" id="CHEBI:17499"/>
        <dbReference type="ChEBI" id="CHEBI:233615"/>
        <dbReference type="ChEBI" id="CHEBI:233617"/>
    </reaction>
    <physiologicalReaction direction="left-to-right" evidence="7">
        <dbReference type="Rhea" id="RHEA:84168"/>
    </physiologicalReaction>
</comment>
<comment type="pathway">
    <text evidence="6 7">Secondary metabolite biosynthesis.</text>
</comment>
<comment type="disruption phenotype">
    <text evidence="6">Abolishes the production of terreic acid, but accumulates terremutin.</text>
</comment>
<comment type="biotechnology">
    <text evidence="3 4">Terreic acid is a metabolite with antibiotic properties (PubMed:23686727). Terreic acid also acts as a selective inhibitor of human Bruton's tyrosine kinase in mast cells and other immune cells (PubMed:10051623).</text>
</comment>
<comment type="similarity">
    <text evidence="12">Belongs to the GMC oxidoreductase family.</text>
</comment>
<comment type="caution">
    <text evidence="6 7">Was originally thought to be a cyclase (PubMed:25265334). However, was later shown to have oxidoreductase activity (PubMed:29391515).</text>
</comment>
<comment type="sequence caution" evidence="12">
    <conflict type="erroneous gene model prediction">
        <sequence resource="EMBL-CDS" id="EAU32818"/>
    </conflict>
</comment>
<reference key="1">
    <citation type="journal article" date="2018" name="Sci. Rep.">
        <title>Heterologous pathway assembly reveals molecular steps of fungal terreic acid biosynthesis.</title>
        <authorList>
            <person name="Kong C."/>
            <person name="Huang H."/>
            <person name="Xue Y."/>
            <person name="Liu Y."/>
            <person name="Peng Q."/>
            <person name="Liu Q."/>
            <person name="Xu Q."/>
            <person name="Zhu Q."/>
            <person name="Yin Y."/>
            <person name="Zhou X."/>
            <person name="Zhang Y."/>
            <person name="Cai M."/>
        </authorList>
    </citation>
    <scope>NUCLEOTIDE SEQUENCE [MRNA]</scope>
    <scope>FUNCTION</scope>
    <scope>CATALYTIC ACTIVITY</scope>
    <scope>PATHWAY</scope>
    <source>
        <strain evidence="11">NIH 2624 / FGSC A1156</strain>
    </source>
</reference>
<reference key="2">
    <citation type="submission" date="2005-09" db="EMBL/GenBank/DDBJ databases">
        <title>Annotation of the Aspergillus terreus NIH2624 genome.</title>
        <authorList>
            <person name="Birren B.W."/>
            <person name="Lander E.S."/>
            <person name="Galagan J.E."/>
            <person name="Nusbaum C."/>
            <person name="Devon K."/>
            <person name="Henn M."/>
            <person name="Ma L.-J."/>
            <person name="Jaffe D.B."/>
            <person name="Butler J."/>
            <person name="Alvarez P."/>
            <person name="Gnerre S."/>
            <person name="Grabherr M."/>
            <person name="Kleber M."/>
            <person name="Mauceli E.W."/>
            <person name="Brockman W."/>
            <person name="Rounsley S."/>
            <person name="Young S.K."/>
            <person name="LaButti K."/>
            <person name="Pushparaj V."/>
            <person name="DeCaprio D."/>
            <person name="Crawford M."/>
            <person name="Koehrsen M."/>
            <person name="Engels R."/>
            <person name="Montgomery P."/>
            <person name="Pearson M."/>
            <person name="Howarth C."/>
            <person name="Larson L."/>
            <person name="Luoma S."/>
            <person name="White J."/>
            <person name="Alvarado L."/>
            <person name="Kodira C.D."/>
            <person name="Zeng Q."/>
            <person name="Oleary S."/>
            <person name="Yandava C."/>
            <person name="Denning D.W."/>
            <person name="Nierman W.C."/>
            <person name="Milne T."/>
            <person name="Madden K."/>
        </authorList>
    </citation>
    <scope>NUCLEOTIDE SEQUENCE [LARGE SCALE GENOMIC DNA]</scope>
    <source>
        <strain>NIH 2624 / FGSC A1156</strain>
    </source>
</reference>
<reference key="3">
    <citation type="journal article" date="1996" name="Mol. Gen. Genet.">
        <title>Cloning of the polyketide synthase gene atX from Aspergillus terreus and its identification as the 6-methylsalicylic acid synthase gene by heterologous expression.</title>
        <authorList>
            <person name="Fujii I."/>
            <person name="Ono Y."/>
            <person name="Tada H."/>
            <person name="Gomi K."/>
            <person name="Ebizuka Y."/>
            <person name="Sankawa U."/>
        </authorList>
    </citation>
    <scope>FUNCTION</scope>
</reference>
<reference key="4">
    <citation type="journal article" date="1997" name="Folia Microbiol. (Praha)">
        <title>Polyketide synthase gene pksM from Aspergillus terreus expressed during growth phase.</title>
        <authorList>
            <person name="Pazoutova S."/>
            <person name="Linka M."/>
            <person name="Storkova S."/>
            <person name="Schwab H."/>
        </authorList>
    </citation>
    <scope>FUNCTION</scope>
</reference>
<reference key="5">
    <citation type="journal article" date="1999" name="Proc. Natl. Acad. Sci. U.S.A.">
        <title>Terreic acid, a quinone epoxide inhibitor of Bruton's tyrosine kinase.</title>
        <authorList>
            <person name="Kawakami Y."/>
            <person name="Hartman S.E."/>
            <person name="Kinoshita E."/>
            <person name="Suzuki H."/>
            <person name="Kitaura J."/>
            <person name="Yao L."/>
            <person name="Inagaki N."/>
            <person name="Franco A."/>
            <person name="Hata D."/>
            <person name="Maeda-Yamamoto M."/>
            <person name="Fukamachi H."/>
            <person name="Nagai H."/>
            <person name="Kawakami T."/>
        </authorList>
    </citation>
    <scope>BIOTECHNOLOGY</scope>
</reference>
<reference key="6">
    <citation type="journal article" date="2014" name="J. Basic Microbiol.">
        <title>Differential antibacterial properties of the MurA inhibitors terreic acid and fosfomycin.</title>
        <authorList>
            <person name="Olesen S.H."/>
            <person name="Ingles D.J."/>
            <person name="Yang Y."/>
            <person name="Schoenbrunn E."/>
        </authorList>
    </citation>
    <scope>BIOTECHNOLOGY</scope>
</reference>
<reference key="7">
    <citation type="journal article" date="2014" name="J. Biotechnol.">
        <title>Culture-based and sequence-based insights into biosynthesis of secondary metabolites by Aspergillus terreus ATCC 20542.</title>
        <authorList>
            <person name="Boruta T."/>
            <person name="Bizukojc M."/>
        </authorList>
    </citation>
    <scope>FUNCTION</scope>
</reference>
<reference key="8">
    <citation type="journal article" date="2014" name="Org. Lett.">
        <title>Molecular genetic characterization of terreic acid pathway in Aspergillus terreus.</title>
        <authorList>
            <person name="Guo C.J."/>
            <person name="Sun W.W."/>
            <person name="Bruno K.S."/>
            <person name="Wang C.C."/>
        </authorList>
    </citation>
    <scope>FUNCTION</scope>
    <scope>DISRUPTION PHENOTYPE</scope>
</reference>
<keyword id="KW-0325">Glycoprotein</keyword>
<keyword id="KW-0560">Oxidoreductase</keyword>
<keyword id="KW-1185">Reference proteome</keyword>
<keyword id="KW-0732">Signal</keyword>
<feature type="signal peptide" evidence="1">
    <location>
        <begin position="1"/>
        <end position="19"/>
    </location>
</feature>
<feature type="chain" id="PRO_0000437638" description="Glucose methanol choline oxidoreductase atC" evidence="1">
    <location>
        <begin position="20"/>
        <end position="606"/>
    </location>
</feature>
<feature type="glycosylation site" description="N-linked (GlcNAc...) asparagine" evidence="2">
    <location>
        <position position="43"/>
    </location>
</feature>
<feature type="glycosylation site" description="N-linked (GlcNAc...) asparagine" evidence="2">
    <location>
        <position position="69"/>
    </location>
</feature>
<feature type="glycosylation site" description="N-linked (GlcNAc...) asparagine" evidence="2">
    <location>
        <position position="87"/>
    </location>
</feature>
<feature type="glycosylation site" description="N-linked (GlcNAc...) asparagine" evidence="2">
    <location>
        <position position="290"/>
    </location>
</feature>
<feature type="glycosylation site" description="N-linked (GlcNAc...) asparagine" evidence="2">
    <location>
        <position position="368"/>
    </location>
</feature>
<feature type="glycosylation site" description="N-linked (GlcNAc...) asparagine" evidence="2">
    <location>
        <position position="418"/>
    </location>
</feature>
<feature type="glycosylation site" description="N-linked (GlcNAc...) asparagine" evidence="2">
    <location>
        <position position="421"/>
    </location>
</feature>
<feature type="glycosylation site" description="N-linked (GlcNAc...) asparagine" evidence="2">
    <location>
        <position position="552"/>
    </location>
</feature>
<proteinExistence type="evidence at protein level"/>
<accession>Q0CJ60</accession>
<accession>A0A2L0V3A4</accession>
<sequence>MRVFPTYIAVSGLFGGAFAAFGATNIKGQTKLFGTSFGILAKNASYDYVIVGGGTAGLTVAARLAAQPNVSVAVIEAGSFYEIDNGNISQVPGYGANYLSFNDLTPSPVLVDWGLITEPQDGLNNRQIHYSAGKTLGGSSALNDMIFHRATKGSYQRWAELVDDDTYTWDKLLPYLKKSVDFTKPKDAATYPYDASVYSPEGGPLQVSFPNYRAPCDDFMETAFTKSGLKPIKGLNSGHLDGFAPTTFVINPADQTRSSSEAAFLQEALDTTAMTLYLRTLAKKILFDTNKTANGVLVETNGAEYTISAKKEVILSAGVFHSPQLLLLSGIGQADSLEKFGIPVISDLAGVGQNLWDHLFIFTSHEMNITTNSGVLVDPELLAEAVESYLNQQTGPLTGIGGGVVGWEKLPNRVSFSNSTNETLASFPDDFPEVEYVALAPGSNPASDPLANHFASVTAAVQSTSSRGYVKLRSADPHDAPIININALSHPADADLAVGAIKRLRQIAEATGVRVKEVLPGPEVVSDAEILEWVRNNAVNGYHASSTCAMGNSSNPDAVVDTRAKVYGVSNLRVVDASALPYLPPGHPMSSIYAFAELIAEDILSK</sequence>
<dbReference type="EC" id="1.1.99.-" evidence="7"/>
<dbReference type="EMBL" id="KY950684">
    <property type="protein sequence ID" value="AUZ97941.1"/>
    <property type="molecule type" value="mRNA"/>
</dbReference>
<dbReference type="EMBL" id="CH476602">
    <property type="protein sequence ID" value="EAU32818.1"/>
    <property type="status" value="ALT_SEQ"/>
    <property type="molecule type" value="Genomic_DNA"/>
</dbReference>
<dbReference type="RefSeq" id="XP_001215452.1">
    <property type="nucleotide sequence ID" value="XM_001215452.1"/>
</dbReference>
<dbReference type="SMR" id="Q0CJ60"/>
<dbReference type="STRING" id="341663.Q0CJ60"/>
<dbReference type="GlyCosmos" id="Q0CJ60">
    <property type="glycosylation" value="8 sites, No reported glycans"/>
</dbReference>
<dbReference type="EnsemblFungi" id="EAU32818">
    <property type="protein sequence ID" value="EAU32818"/>
    <property type="gene ID" value="ATEG_06274"/>
</dbReference>
<dbReference type="GeneID" id="4322098"/>
<dbReference type="VEuPathDB" id="FungiDB:ATEG_06274"/>
<dbReference type="eggNOG" id="KOG1238">
    <property type="taxonomic scope" value="Eukaryota"/>
</dbReference>
<dbReference type="HOGENOM" id="CLU_002865_6_3_1"/>
<dbReference type="OMA" id="YQNWHAS"/>
<dbReference type="OrthoDB" id="269227at2759"/>
<dbReference type="Proteomes" id="UP000007963">
    <property type="component" value="Unassembled WGS sequence"/>
</dbReference>
<dbReference type="GO" id="GO:0050660">
    <property type="term" value="F:flavin adenine dinucleotide binding"/>
    <property type="evidence" value="ECO:0007669"/>
    <property type="project" value="InterPro"/>
</dbReference>
<dbReference type="GO" id="GO:0016829">
    <property type="term" value="F:lyase activity"/>
    <property type="evidence" value="ECO:0007669"/>
    <property type="project" value="UniProtKB-KW"/>
</dbReference>
<dbReference type="GO" id="GO:0016614">
    <property type="term" value="F:oxidoreductase activity, acting on CH-OH group of donors"/>
    <property type="evidence" value="ECO:0007669"/>
    <property type="project" value="InterPro"/>
</dbReference>
<dbReference type="GO" id="GO:0044550">
    <property type="term" value="P:secondary metabolite biosynthetic process"/>
    <property type="evidence" value="ECO:0007669"/>
    <property type="project" value="TreeGrafter"/>
</dbReference>
<dbReference type="Gene3D" id="3.50.50.60">
    <property type="entry name" value="FAD/NAD(P)-binding domain"/>
    <property type="match status" value="1"/>
</dbReference>
<dbReference type="Gene3D" id="3.30.560.10">
    <property type="entry name" value="Glucose Oxidase, domain 3"/>
    <property type="match status" value="1"/>
</dbReference>
<dbReference type="InterPro" id="IPR036188">
    <property type="entry name" value="FAD/NAD-bd_sf"/>
</dbReference>
<dbReference type="InterPro" id="IPR012132">
    <property type="entry name" value="GMC_OxRdtase"/>
</dbReference>
<dbReference type="InterPro" id="IPR000172">
    <property type="entry name" value="GMC_OxRdtase_N"/>
</dbReference>
<dbReference type="InterPro" id="IPR007867">
    <property type="entry name" value="GMC_OxRtase_C"/>
</dbReference>
<dbReference type="PANTHER" id="PTHR11552">
    <property type="entry name" value="GLUCOSE-METHANOL-CHOLINE GMC OXIDOREDUCTASE"/>
    <property type="match status" value="1"/>
</dbReference>
<dbReference type="PANTHER" id="PTHR11552:SF228">
    <property type="entry name" value="GLUCOSE-METHANOL-CHOLINE OXIDOREDUCTASE N-TERMINAL DOMAIN-CONTAINING PROTEIN"/>
    <property type="match status" value="1"/>
</dbReference>
<dbReference type="Pfam" id="PF05199">
    <property type="entry name" value="GMC_oxred_C"/>
    <property type="match status" value="1"/>
</dbReference>
<dbReference type="Pfam" id="PF00732">
    <property type="entry name" value="GMC_oxred_N"/>
    <property type="match status" value="1"/>
</dbReference>
<dbReference type="PIRSF" id="PIRSF000137">
    <property type="entry name" value="Alcohol_oxidase"/>
    <property type="match status" value="1"/>
</dbReference>
<dbReference type="SUPFAM" id="SSF54373">
    <property type="entry name" value="FAD-linked reductases, C-terminal domain"/>
    <property type="match status" value="1"/>
</dbReference>
<dbReference type="SUPFAM" id="SSF51905">
    <property type="entry name" value="FAD/NAD(P)-binding domain"/>
    <property type="match status" value="1"/>
</dbReference>
<protein>
    <recommendedName>
        <fullName evidence="11">Glucose methanol choline oxidoreductase atC</fullName>
        <ecNumber evidence="7">1.1.99.-</ecNumber>
    </recommendedName>
    <alternativeName>
        <fullName evidence="10">Terreic acid biosynthesis cluster protein C</fullName>
    </alternativeName>
</protein>